<comment type="function">
    <text evidence="4">Ferredoxins are iron-sulfur proteins that transfer electrons in a wide variety of metabolic reactions.</text>
</comment>
<comment type="cofactor">
    <cofactor evidence="4">
        <name>[2Fe-2S] cluster</name>
        <dbReference type="ChEBI" id="CHEBI:190135"/>
    </cofactor>
    <text evidence="4">Binds 1 [2Fe-2S] cluster.</text>
</comment>
<comment type="similarity">
    <text evidence="1">Belongs to the 2Fe2S plant-type ferredoxin family.</text>
</comment>
<sequence length="15" mass="1683">MATIYKVTLINETEG</sequence>
<reference evidence="4" key="1">
    <citation type="submission" date="2001-10" db="UniProtKB">
        <authorList>
            <person name="Apte S.K."/>
            <person name="Uhlemann E."/>
            <person name="Schmid R."/>
            <person name="Altendorf K."/>
        </authorList>
    </citation>
    <scope>PROTEIN SEQUENCE OF 2-15</scope>
</reference>
<evidence type="ECO:0000255" key="1"/>
<evidence type="ECO:0000255" key="2">
    <source>
        <dbReference type="PROSITE-ProRule" id="PRU00465"/>
    </source>
</evidence>
<evidence type="ECO:0000269" key="3">
    <source ref="1"/>
</evidence>
<evidence type="ECO:0000305" key="4"/>
<name>FER_ANASL</name>
<keyword id="KW-0001">2Fe-2S</keyword>
<keyword id="KW-0903">Direct protein sequencing</keyword>
<keyword id="KW-0249">Electron transport</keyword>
<keyword id="KW-0408">Iron</keyword>
<keyword id="KW-0411">Iron-sulfur</keyword>
<keyword id="KW-0479">Metal-binding</keyword>
<keyword id="KW-0813">Transport</keyword>
<accession>P83156</accession>
<organism>
    <name type="scientific">Anabaena sp. (strain L31)</name>
    <dbReference type="NCBI Taxonomy" id="29412"/>
    <lineage>
        <taxon>Bacteria</taxon>
        <taxon>Bacillati</taxon>
        <taxon>Cyanobacteriota</taxon>
        <taxon>Cyanophyceae</taxon>
        <taxon>Nostocales</taxon>
        <taxon>Nostocaceae</taxon>
        <taxon>Anabaena</taxon>
    </lineage>
</organism>
<proteinExistence type="evidence at protein level"/>
<protein>
    <recommendedName>
        <fullName>Ferredoxin</fullName>
    </recommendedName>
</protein>
<dbReference type="GO" id="GO:0051537">
    <property type="term" value="F:2 iron, 2 sulfur cluster binding"/>
    <property type="evidence" value="ECO:0007669"/>
    <property type="project" value="UniProtKB-KW"/>
</dbReference>
<dbReference type="GO" id="GO:0046872">
    <property type="term" value="F:metal ion binding"/>
    <property type="evidence" value="ECO:0007669"/>
    <property type="project" value="UniProtKB-KW"/>
</dbReference>
<feature type="initiator methionine" description="Removed" evidence="3">
    <location>
        <position position="1"/>
    </location>
</feature>
<feature type="chain" id="PRO_0000262930" description="Ferredoxin">
    <location>
        <begin position="2"/>
        <end position="15" status="greater than"/>
    </location>
</feature>
<feature type="domain" description="2Fe-2S ferredoxin-type" evidence="2">
    <location>
        <begin position="5"/>
        <end position="15" status="greater than"/>
    </location>
</feature>
<feature type="non-terminal residue">
    <location>
        <position position="15"/>
    </location>
</feature>